<reference key="1">
    <citation type="submission" date="2008-10" db="EMBL/GenBank/DDBJ databases">
        <title>Genome sequence of Bacillus cereus B4264.</title>
        <authorList>
            <person name="Dodson R.J."/>
            <person name="Durkin A.S."/>
            <person name="Rosovitz M.J."/>
            <person name="Rasko D.A."/>
            <person name="Hoffmaster A."/>
            <person name="Ravel J."/>
            <person name="Sutton G."/>
        </authorList>
    </citation>
    <scope>NUCLEOTIDE SEQUENCE [LARGE SCALE GENOMIC DNA]</scope>
    <source>
        <strain>B4264</strain>
    </source>
</reference>
<dbReference type="EC" id="3.2.2.-" evidence="1"/>
<dbReference type="EMBL" id="CP001176">
    <property type="protein sequence ID" value="ACK60629.1"/>
    <property type="molecule type" value="Genomic_DNA"/>
</dbReference>
<dbReference type="RefSeq" id="WP_001148783.1">
    <property type="nucleotide sequence ID" value="NZ_VEHB01000010.1"/>
</dbReference>
<dbReference type="SMR" id="B7HEV9"/>
<dbReference type="KEGG" id="bcb:BCB4264_A0922"/>
<dbReference type="HOGENOM" id="CLU_060471_0_2_9"/>
<dbReference type="Proteomes" id="UP000007096">
    <property type="component" value="Chromosome"/>
</dbReference>
<dbReference type="GO" id="GO:0003905">
    <property type="term" value="F:alkylbase DNA N-glycosylase activity"/>
    <property type="evidence" value="ECO:0007669"/>
    <property type="project" value="InterPro"/>
</dbReference>
<dbReference type="GO" id="GO:0003677">
    <property type="term" value="F:DNA binding"/>
    <property type="evidence" value="ECO:0007669"/>
    <property type="project" value="InterPro"/>
</dbReference>
<dbReference type="GO" id="GO:0006284">
    <property type="term" value="P:base-excision repair"/>
    <property type="evidence" value="ECO:0007669"/>
    <property type="project" value="InterPro"/>
</dbReference>
<dbReference type="CDD" id="cd00540">
    <property type="entry name" value="AAG"/>
    <property type="match status" value="1"/>
</dbReference>
<dbReference type="FunFam" id="3.10.300.10:FF:000001">
    <property type="entry name" value="Putative 3-methyladenine DNA glycosylase"/>
    <property type="match status" value="1"/>
</dbReference>
<dbReference type="Gene3D" id="3.10.300.10">
    <property type="entry name" value="Methylpurine-DNA glycosylase (MPG)"/>
    <property type="match status" value="1"/>
</dbReference>
<dbReference type="HAMAP" id="MF_00527">
    <property type="entry name" value="3MGH"/>
    <property type="match status" value="1"/>
</dbReference>
<dbReference type="InterPro" id="IPR011034">
    <property type="entry name" value="Formyl_transferase-like_C_sf"/>
</dbReference>
<dbReference type="InterPro" id="IPR003180">
    <property type="entry name" value="MPG"/>
</dbReference>
<dbReference type="InterPro" id="IPR036995">
    <property type="entry name" value="MPG_sf"/>
</dbReference>
<dbReference type="NCBIfam" id="TIGR00567">
    <property type="entry name" value="3mg"/>
    <property type="match status" value="1"/>
</dbReference>
<dbReference type="NCBIfam" id="NF002001">
    <property type="entry name" value="PRK00802.1-1"/>
    <property type="match status" value="1"/>
</dbReference>
<dbReference type="NCBIfam" id="NF002003">
    <property type="entry name" value="PRK00802.1-3"/>
    <property type="match status" value="1"/>
</dbReference>
<dbReference type="PANTHER" id="PTHR10429">
    <property type="entry name" value="DNA-3-METHYLADENINE GLYCOSYLASE"/>
    <property type="match status" value="1"/>
</dbReference>
<dbReference type="PANTHER" id="PTHR10429:SF0">
    <property type="entry name" value="DNA-3-METHYLADENINE GLYCOSYLASE"/>
    <property type="match status" value="1"/>
</dbReference>
<dbReference type="Pfam" id="PF02245">
    <property type="entry name" value="Pur_DNA_glyco"/>
    <property type="match status" value="1"/>
</dbReference>
<dbReference type="SUPFAM" id="SSF50486">
    <property type="entry name" value="FMT C-terminal domain-like"/>
    <property type="match status" value="1"/>
</dbReference>
<evidence type="ECO:0000255" key="1">
    <source>
        <dbReference type="HAMAP-Rule" id="MF_00527"/>
    </source>
</evidence>
<protein>
    <recommendedName>
        <fullName evidence="1">Putative 3-methyladenine DNA glycosylase</fullName>
        <ecNumber evidence="1">3.2.2.-</ecNumber>
    </recommendedName>
</protein>
<accession>B7HEV9</accession>
<sequence>MQAPPSFYEGDTLEVAKKLLGQKLVHIVDGIKRSGIIVEVEAYKGPDDKAAHSYGGRRTDRTEVMFGAPGHAYVYLIYGMYHCFNVITAPVGTPQGVLIRALEPVDGIAEIKLARYNKTEITKAQYKNLTNGPGKLCRALGITLKERGVSLQNDTLHIELVPKEEHISSQYKITAGPRINIDYAEEAVHYPWRFYYEGHPFVSKK</sequence>
<name>3MGH_BACC4</name>
<keyword id="KW-0227">DNA damage</keyword>
<keyword id="KW-0234">DNA repair</keyword>
<keyword id="KW-0378">Hydrolase</keyword>
<organism>
    <name type="scientific">Bacillus cereus (strain B4264)</name>
    <dbReference type="NCBI Taxonomy" id="405532"/>
    <lineage>
        <taxon>Bacteria</taxon>
        <taxon>Bacillati</taxon>
        <taxon>Bacillota</taxon>
        <taxon>Bacilli</taxon>
        <taxon>Bacillales</taxon>
        <taxon>Bacillaceae</taxon>
        <taxon>Bacillus</taxon>
        <taxon>Bacillus cereus group</taxon>
    </lineage>
</organism>
<proteinExistence type="inferred from homology"/>
<feature type="chain" id="PRO_1000127747" description="Putative 3-methyladenine DNA glycosylase">
    <location>
        <begin position="1"/>
        <end position="205"/>
    </location>
</feature>
<gene>
    <name type="ordered locus">BCB4264_A0922</name>
</gene>
<comment type="similarity">
    <text evidence="1">Belongs to the DNA glycosylase MPG family.</text>
</comment>